<feature type="chain" id="PRO_0000103826" description="Uncharacterized protein Rv1356c">
    <location>
        <begin position="1"/>
        <end position="263"/>
    </location>
</feature>
<name>Y1356_MYCTU</name>
<organism>
    <name type="scientific">Mycobacterium tuberculosis (strain ATCC 25618 / H37Rv)</name>
    <dbReference type="NCBI Taxonomy" id="83332"/>
    <lineage>
        <taxon>Bacteria</taxon>
        <taxon>Bacillati</taxon>
        <taxon>Actinomycetota</taxon>
        <taxon>Actinomycetes</taxon>
        <taxon>Mycobacteriales</taxon>
        <taxon>Mycobacteriaceae</taxon>
        <taxon>Mycobacterium</taxon>
        <taxon>Mycobacterium tuberculosis complex</taxon>
    </lineage>
</organism>
<keyword id="KW-1185">Reference proteome</keyword>
<proteinExistence type="predicted"/>
<gene>
    <name type="ordered locus">Rv1356c</name>
    <name type="ORF">MTCY02B10.20c</name>
</gene>
<sequence>MLIAGYLTDWRIMTTAQLRPIAPQKLHFSENLSVWVSDAQCRLVVSQPALDPTLWNTYLQGALRAYSKHGVECTLDLDAISDGSDTQLFFAAIDIGGDVVGGARVIGPLRSADDSHAVVEWAGNPGLSAVRKMINDRAPFGVVEVKSGWVNSDAQRSDAIAAALARALPLSMSLLGVQFVMGTAAAHALDRWRSSGGVIAARIPAAAYPDERYRTKMIWWDRRTLANHAEPKQLSRMLVESRKLLRDVEALSATTAATAGAEQ</sequence>
<reference key="1">
    <citation type="journal article" date="1998" name="Nature">
        <title>Deciphering the biology of Mycobacterium tuberculosis from the complete genome sequence.</title>
        <authorList>
            <person name="Cole S.T."/>
            <person name="Brosch R."/>
            <person name="Parkhill J."/>
            <person name="Garnier T."/>
            <person name="Churcher C.M."/>
            <person name="Harris D.E."/>
            <person name="Gordon S.V."/>
            <person name="Eiglmeier K."/>
            <person name="Gas S."/>
            <person name="Barry C.E. III"/>
            <person name="Tekaia F."/>
            <person name="Badcock K."/>
            <person name="Basham D."/>
            <person name="Brown D."/>
            <person name="Chillingworth T."/>
            <person name="Connor R."/>
            <person name="Davies R.M."/>
            <person name="Devlin K."/>
            <person name="Feltwell T."/>
            <person name="Gentles S."/>
            <person name="Hamlin N."/>
            <person name="Holroyd S."/>
            <person name="Hornsby T."/>
            <person name="Jagels K."/>
            <person name="Krogh A."/>
            <person name="McLean J."/>
            <person name="Moule S."/>
            <person name="Murphy L.D."/>
            <person name="Oliver S."/>
            <person name="Osborne J."/>
            <person name="Quail M.A."/>
            <person name="Rajandream M.A."/>
            <person name="Rogers J."/>
            <person name="Rutter S."/>
            <person name="Seeger K."/>
            <person name="Skelton S."/>
            <person name="Squares S."/>
            <person name="Squares R."/>
            <person name="Sulston J.E."/>
            <person name="Taylor K."/>
            <person name="Whitehead S."/>
            <person name="Barrell B.G."/>
        </authorList>
    </citation>
    <scope>NUCLEOTIDE SEQUENCE [LARGE SCALE GENOMIC DNA]</scope>
    <source>
        <strain>ATCC 25618 / H37Rv</strain>
    </source>
</reference>
<protein>
    <recommendedName>
        <fullName>Uncharacterized protein Rv1356c</fullName>
    </recommendedName>
</protein>
<accession>P9WM09</accession>
<accession>L0T956</accession>
<accession>P64827</accession>
<accession>Q11026</accession>
<dbReference type="EMBL" id="AL123456">
    <property type="protein sequence ID" value="CCP44114.1"/>
    <property type="molecule type" value="Genomic_DNA"/>
</dbReference>
<dbReference type="PIR" id="C70741">
    <property type="entry name" value="C70741"/>
</dbReference>
<dbReference type="RefSeq" id="NP_215872.1">
    <property type="nucleotide sequence ID" value="NC_000962.3"/>
</dbReference>
<dbReference type="RefSeq" id="WP_003406981.1">
    <property type="nucleotide sequence ID" value="NC_000962.3"/>
</dbReference>
<dbReference type="STRING" id="83332.Rv1356c"/>
<dbReference type="PaxDb" id="83332-Rv1356c"/>
<dbReference type="DNASU" id="886850"/>
<dbReference type="GeneID" id="886850"/>
<dbReference type="KEGG" id="mtu:Rv1356c"/>
<dbReference type="KEGG" id="mtv:RVBD_1356c"/>
<dbReference type="PATRIC" id="fig|83332.111.peg.1512"/>
<dbReference type="TubercuList" id="Rv1356c"/>
<dbReference type="eggNOG" id="ENOG5033WAI">
    <property type="taxonomic scope" value="Bacteria"/>
</dbReference>
<dbReference type="InParanoid" id="P9WM09"/>
<dbReference type="OrthoDB" id="5175138at2"/>
<dbReference type="Proteomes" id="UP000001584">
    <property type="component" value="Chromosome"/>
</dbReference>